<accession>Q4ZZA8</accession>
<dbReference type="EMBL" id="CP000075">
    <property type="protein sequence ID" value="AAY35514.1"/>
    <property type="molecule type" value="Genomic_DNA"/>
</dbReference>
<dbReference type="RefSeq" id="WP_011266407.1">
    <property type="nucleotide sequence ID" value="NC_007005.1"/>
</dbReference>
<dbReference type="RefSeq" id="YP_233552.1">
    <property type="nucleotide sequence ID" value="NC_007005.1"/>
</dbReference>
<dbReference type="SMR" id="Q4ZZA8"/>
<dbReference type="STRING" id="205918.Psyr_0444"/>
<dbReference type="KEGG" id="psb:Psyr_0444"/>
<dbReference type="PATRIC" id="fig|205918.7.peg.461"/>
<dbReference type="eggNOG" id="COG3052">
    <property type="taxonomic scope" value="Bacteria"/>
</dbReference>
<dbReference type="HOGENOM" id="CLU_173135_1_0_6"/>
<dbReference type="OrthoDB" id="120290at2"/>
<dbReference type="Proteomes" id="UP000000426">
    <property type="component" value="Chromosome"/>
</dbReference>
<dbReference type="GO" id="GO:0005737">
    <property type="term" value="C:cytoplasm"/>
    <property type="evidence" value="ECO:0007669"/>
    <property type="project" value="UniProtKB-SubCell"/>
</dbReference>
<dbReference type="GO" id="GO:0000036">
    <property type="term" value="F:acyl carrier activity"/>
    <property type="evidence" value="ECO:0007669"/>
    <property type="project" value="UniProtKB-UniRule"/>
</dbReference>
<dbReference type="HAMAP" id="MF_00710">
    <property type="entry name" value="Malonate_deCO2ase_dsu"/>
    <property type="match status" value="1"/>
</dbReference>
<dbReference type="InterPro" id="IPR023439">
    <property type="entry name" value="Mal_deCO2ase/Cit_lyase_ACP"/>
</dbReference>
<dbReference type="InterPro" id="IPR009662">
    <property type="entry name" value="Malonate_deCO2ase_dsu"/>
</dbReference>
<dbReference type="NCBIfam" id="TIGR03130">
    <property type="entry name" value="malonate_delta"/>
    <property type="match status" value="1"/>
</dbReference>
<dbReference type="NCBIfam" id="NF002293">
    <property type="entry name" value="PRK01220.1"/>
    <property type="match status" value="1"/>
</dbReference>
<dbReference type="Pfam" id="PF06857">
    <property type="entry name" value="ACP"/>
    <property type="match status" value="1"/>
</dbReference>
<organism>
    <name type="scientific">Pseudomonas syringae pv. syringae (strain B728a)</name>
    <dbReference type="NCBI Taxonomy" id="205918"/>
    <lineage>
        <taxon>Bacteria</taxon>
        <taxon>Pseudomonadati</taxon>
        <taxon>Pseudomonadota</taxon>
        <taxon>Gammaproteobacteria</taxon>
        <taxon>Pseudomonadales</taxon>
        <taxon>Pseudomonadaceae</taxon>
        <taxon>Pseudomonas</taxon>
        <taxon>Pseudomonas syringae</taxon>
    </lineage>
</organism>
<reference key="1">
    <citation type="journal article" date="2005" name="Proc. Natl. Acad. Sci. U.S.A.">
        <title>Comparison of the complete genome sequences of Pseudomonas syringae pv. syringae B728a and pv. tomato DC3000.</title>
        <authorList>
            <person name="Feil H."/>
            <person name="Feil W.S."/>
            <person name="Chain P."/>
            <person name="Larimer F."/>
            <person name="Dibartolo G."/>
            <person name="Copeland A."/>
            <person name="Lykidis A."/>
            <person name="Trong S."/>
            <person name="Nolan M."/>
            <person name="Goltsman E."/>
            <person name="Thiel J."/>
            <person name="Malfatti S."/>
            <person name="Loper J.E."/>
            <person name="Lapidus A."/>
            <person name="Detter J.C."/>
            <person name="Land M."/>
            <person name="Richardson P.M."/>
            <person name="Kyrpides N.C."/>
            <person name="Ivanova N."/>
            <person name="Lindow S.E."/>
        </authorList>
    </citation>
    <scope>NUCLEOTIDE SEQUENCE [LARGE SCALE GENOMIC DNA]</scope>
    <source>
        <strain>B728a</strain>
    </source>
</reference>
<keyword id="KW-0963">Cytoplasm</keyword>
<keyword id="KW-0597">Phosphoprotein</keyword>
<evidence type="ECO:0000255" key="1">
    <source>
        <dbReference type="HAMAP-Rule" id="MF_00710"/>
    </source>
</evidence>
<comment type="function">
    <text evidence="1">Subunit of malonate decarboxylase, it is an acyl carrier protein to which acetyl and malonyl thioester residues are bound via a 2'-(5''-phosphoribosyl)-3'-dephospho-CoA prosthetic group and turn over during the catalytic mechanism.</text>
</comment>
<comment type="subcellular location">
    <subcellularLocation>
        <location evidence="1">Cytoplasm</location>
    </subcellularLocation>
</comment>
<comment type="PTM">
    <text evidence="1">Covalently binds the prosthetic group of malonate decarboxylase.</text>
</comment>
<comment type="similarity">
    <text evidence="1">Belongs to the MdcC family.</text>
</comment>
<proteinExistence type="inferred from homology"/>
<feature type="chain" id="PRO_0000303114" description="Malonate decarboxylase acyl carrier protein">
    <location>
        <begin position="1"/>
        <end position="99"/>
    </location>
</feature>
<feature type="modified residue" description="O-(phosphoribosyl dephospho-coenzyme A)serine" evidence="1">
    <location>
        <position position="25"/>
    </location>
</feature>
<gene>
    <name evidence="1" type="primary">mdcC</name>
    <name type="ordered locus">Psyr_0444</name>
</gene>
<protein>
    <recommendedName>
        <fullName evidence="1">Malonate decarboxylase acyl carrier protein</fullName>
    </recommendedName>
    <alternativeName>
        <fullName evidence="1">Malonate decarboxylase subunit delta</fullName>
    </alternativeName>
</protein>
<name>MDCC_PSEU2</name>
<sequence>METLSFEFPAGQPPKGRALVGVVGSGDLEVLLEPGKPGTLSIQVVTSVNGAALRWQHLFERMFDGQTPPALSIDIHDFGATPGVVRMRLEQGFEEIGHD</sequence>